<keyword id="KW-1185">Reference proteome</keyword>
<keyword id="KW-0687">Ribonucleoprotein</keyword>
<keyword id="KW-0689">Ribosomal protein</keyword>
<accession>Q3J5S3</accession>
<reference key="1">
    <citation type="submission" date="2005-09" db="EMBL/GenBank/DDBJ databases">
        <title>Complete sequence of chromosome 1 of Rhodobacter sphaeroides 2.4.1.</title>
        <authorList>
            <person name="Copeland A."/>
            <person name="Lucas S."/>
            <person name="Lapidus A."/>
            <person name="Barry K."/>
            <person name="Detter J.C."/>
            <person name="Glavina T."/>
            <person name="Hammon N."/>
            <person name="Israni S."/>
            <person name="Pitluck S."/>
            <person name="Richardson P."/>
            <person name="Mackenzie C."/>
            <person name="Choudhary M."/>
            <person name="Larimer F."/>
            <person name="Hauser L.J."/>
            <person name="Land M."/>
            <person name="Donohue T.J."/>
            <person name="Kaplan S."/>
        </authorList>
    </citation>
    <scope>NUCLEOTIDE SEQUENCE [LARGE SCALE GENOMIC DNA]</scope>
    <source>
        <strain>ATCC 17023 / DSM 158 / JCM 6121 / CCUG 31486 / LMG 2827 / NBRC 12203 / NCIMB 8253 / ATH 2.4.1.</strain>
    </source>
</reference>
<proteinExistence type="inferred from homology"/>
<feature type="chain" id="PRO_0000237086" description="Small ribosomal subunit protein uS10">
    <location>
        <begin position="1"/>
        <end position="102"/>
    </location>
</feature>
<gene>
    <name evidence="1" type="primary">rpsJ</name>
    <name type="ordered locus">RHOS4_02930</name>
    <name type="ORF">RSP_1715</name>
</gene>
<evidence type="ECO:0000255" key="1">
    <source>
        <dbReference type="HAMAP-Rule" id="MF_00508"/>
    </source>
</evidence>
<evidence type="ECO:0000305" key="2"/>
<protein>
    <recommendedName>
        <fullName evidence="1">Small ribosomal subunit protein uS10</fullName>
    </recommendedName>
    <alternativeName>
        <fullName evidence="2">30S ribosomal protein S10</fullName>
    </alternativeName>
</protein>
<sequence>MQGQTIRIRLKAFDYRVLDASTQEIVNTAKRTGAQVRGPIPLPNKIEKFTVLRGPHIDKKSRDQWEIRTHKRLLDIVDPTPQTVDALMKLDLAAGVDIQIKV</sequence>
<dbReference type="EMBL" id="CP000143">
    <property type="protein sequence ID" value="ABA77861.1"/>
    <property type="molecule type" value="Genomic_DNA"/>
</dbReference>
<dbReference type="RefSeq" id="WP_002722490.1">
    <property type="nucleotide sequence ID" value="NZ_CP030271.1"/>
</dbReference>
<dbReference type="RefSeq" id="YP_351762.1">
    <property type="nucleotide sequence ID" value="NC_007493.2"/>
</dbReference>
<dbReference type="SMR" id="Q3J5S3"/>
<dbReference type="STRING" id="272943.RSP_1715"/>
<dbReference type="EnsemblBacteria" id="ABA77861">
    <property type="protein sequence ID" value="ABA77861"/>
    <property type="gene ID" value="RSP_1715"/>
</dbReference>
<dbReference type="GeneID" id="67445499"/>
<dbReference type="KEGG" id="rsp:RSP_1715"/>
<dbReference type="PATRIC" id="fig|272943.9.peg.592"/>
<dbReference type="eggNOG" id="COG0051">
    <property type="taxonomic scope" value="Bacteria"/>
</dbReference>
<dbReference type="OrthoDB" id="9804464at2"/>
<dbReference type="PhylomeDB" id="Q3J5S3"/>
<dbReference type="Proteomes" id="UP000002703">
    <property type="component" value="Chromosome 1"/>
</dbReference>
<dbReference type="GO" id="GO:1990904">
    <property type="term" value="C:ribonucleoprotein complex"/>
    <property type="evidence" value="ECO:0007669"/>
    <property type="project" value="UniProtKB-KW"/>
</dbReference>
<dbReference type="GO" id="GO:0005840">
    <property type="term" value="C:ribosome"/>
    <property type="evidence" value="ECO:0007669"/>
    <property type="project" value="UniProtKB-KW"/>
</dbReference>
<dbReference type="GO" id="GO:0003735">
    <property type="term" value="F:structural constituent of ribosome"/>
    <property type="evidence" value="ECO:0007669"/>
    <property type="project" value="InterPro"/>
</dbReference>
<dbReference type="GO" id="GO:0000049">
    <property type="term" value="F:tRNA binding"/>
    <property type="evidence" value="ECO:0007669"/>
    <property type="project" value="UniProtKB-UniRule"/>
</dbReference>
<dbReference type="GO" id="GO:0006412">
    <property type="term" value="P:translation"/>
    <property type="evidence" value="ECO:0007669"/>
    <property type="project" value="UniProtKB-UniRule"/>
</dbReference>
<dbReference type="FunFam" id="3.30.70.600:FF:000001">
    <property type="entry name" value="30S ribosomal protein S10"/>
    <property type="match status" value="1"/>
</dbReference>
<dbReference type="Gene3D" id="3.30.70.600">
    <property type="entry name" value="Ribosomal protein S10 domain"/>
    <property type="match status" value="1"/>
</dbReference>
<dbReference type="HAMAP" id="MF_00508">
    <property type="entry name" value="Ribosomal_uS10"/>
    <property type="match status" value="1"/>
</dbReference>
<dbReference type="InterPro" id="IPR001848">
    <property type="entry name" value="Ribosomal_uS10"/>
</dbReference>
<dbReference type="InterPro" id="IPR027486">
    <property type="entry name" value="Ribosomal_uS10_dom"/>
</dbReference>
<dbReference type="InterPro" id="IPR036838">
    <property type="entry name" value="Ribosomal_uS10_dom_sf"/>
</dbReference>
<dbReference type="NCBIfam" id="NF001861">
    <property type="entry name" value="PRK00596.1"/>
    <property type="match status" value="1"/>
</dbReference>
<dbReference type="NCBIfam" id="TIGR01049">
    <property type="entry name" value="rpsJ_bact"/>
    <property type="match status" value="1"/>
</dbReference>
<dbReference type="PANTHER" id="PTHR11700">
    <property type="entry name" value="30S RIBOSOMAL PROTEIN S10 FAMILY MEMBER"/>
    <property type="match status" value="1"/>
</dbReference>
<dbReference type="Pfam" id="PF00338">
    <property type="entry name" value="Ribosomal_S10"/>
    <property type="match status" value="1"/>
</dbReference>
<dbReference type="PRINTS" id="PR00971">
    <property type="entry name" value="RIBOSOMALS10"/>
</dbReference>
<dbReference type="SMART" id="SM01403">
    <property type="entry name" value="Ribosomal_S10"/>
    <property type="match status" value="1"/>
</dbReference>
<dbReference type="SUPFAM" id="SSF54999">
    <property type="entry name" value="Ribosomal protein S10"/>
    <property type="match status" value="1"/>
</dbReference>
<name>RS10_CERS4</name>
<organism>
    <name type="scientific">Cereibacter sphaeroides (strain ATCC 17023 / DSM 158 / JCM 6121 / CCUG 31486 / LMG 2827 / NBRC 12203 / NCIMB 8253 / ATH 2.4.1.)</name>
    <name type="common">Rhodobacter sphaeroides</name>
    <dbReference type="NCBI Taxonomy" id="272943"/>
    <lineage>
        <taxon>Bacteria</taxon>
        <taxon>Pseudomonadati</taxon>
        <taxon>Pseudomonadota</taxon>
        <taxon>Alphaproteobacteria</taxon>
        <taxon>Rhodobacterales</taxon>
        <taxon>Paracoccaceae</taxon>
        <taxon>Cereibacter</taxon>
    </lineage>
</organism>
<comment type="function">
    <text evidence="1">Involved in the binding of tRNA to the ribosomes.</text>
</comment>
<comment type="subunit">
    <text evidence="1">Part of the 30S ribosomal subunit.</text>
</comment>
<comment type="similarity">
    <text evidence="1">Belongs to the universal ribosomal protein uS10 family.</text>
</comment>